<comment type="subcellular location">
    <subcellularLocation>
        <location evidence="2">Membrane</location>
        <topology evidence="2">Multi-pass membrane protein</topology>
    </subcellularLocation>
</comment>
<comment type="similarity">
    <text evidence="2">Belongs to the nematode receptor-like protein sre family.</text>
</comment>
<keyword id="KW-0472">Membrane</keyword>
<keyword id="KW-1185">Reference proteome</keyword>
<keyword id="KW-0812">Transmembrane</keyword>
<keyword id="KW-1133">Transmembrane helix</keyword>
<proteinExistence type="inferred from homology"/>
<sequence>MNFQFLAIFSVRLATKEEVLDRTQESGDVNVVWVFTYNSNREFSVFEFILINFLFLLSIFVTFIGVFCIGKSNIPHRNARWIIISGMLLWLELVVSRSFVFIFQWSSDGLQSRSGLLFWAALLRYHYMFFGVHTLLCITAERAMATILLKDYETRPRVWIAAILIGANFLISLTYAFLAVFQQILMKSIFIVCLAVAVVSIILLEIIYFLNRKRLDSLIRHDNTMVLYTLSIKYQLQENVRSCRLMRPAVVVVGAFIIMLILAECLPIILDFSDEVQMWCNLIFDTTVHTDPLVVVPTVVALMESFRKVFLSYYRTLQHKIRPNTVAVIRRKSIFPFTKPKETEGDIYFEMFNKSVSPNSLAVKK</sequence>
<organism>
    <name type="scientific">Caenorhabditis elegans</name>
    <dbReference type="NCBI Taxonomy" id="6239"/>
    <lineage>
        <taxon>Eukaryota</taxon>
        <taxon>Metazoa</taxon>
        <taxon>Ecdysozoa</taxon>
        <taxon>Nematoda</taxon>
        <taxon>Chromadorea</taxon>
        <taxon>Rhabditida</taxon>
        <taxon>Rhabditina</taxon>
        <taxon>Rhabditomorpha</taxon>
        <taxon>Rhabditoidea</taxon>
        <taxon>Rhabditidae</taxon>
        <taxon>Peloderinae</taxon>
        <taxon>Caenorhabditis</taxon>
    </lineage>
</organism>
<dbReference type="EMBL" id="Z81484">
    <property type="protein sequence ID" value="CAB03969.2"/>
    <property type="molecule type" value="Genomic_DNA"/>
</dbReference>
<dbReference type="PIR" id="T19978">
    <property type="entry name" value="T19978"/>
</dbReference>
<dbReference type="RefSeq" id="NP_507490.2">
    <property type="nucleotide sequence ID" value="NM_075089.2"/>
</dbReference>
<dbReference type="SMR" id="O45306"/>
<dbReference type="FunCoup" id="O45306">
    <property type="interactions" value="156"/>
</dbReference>
<dbReference type="STRING" id="6239.C47A10.4.1"/>
<dbReference type="PaxDb" id="6239-C47A10.4"/>
<dbReference type="EnsemblMetazoa" id="C47A10.4.1">
    <property type="protein sequence ID" value="C47A10.4.1"/>
    <property type="gene ID" value="WBGene00008126"/>
</dbReference>
<dbReference type="GeneID" id="183529"/>
<dbReference type="KEGG" id="cel:CELE_C47A10.4"/>
<dbReference type="UCSC" id="C47A10.4">
    <property type="organism name" value="c. elegans"/>
</dbReference>
<dbReference type="AGR" id="WB:WBGene00008126"/>
<dbReference type="CTD" id="183529"/>
<dbReference type="WormBase" id="C47A10.4">
    <property type="protein sequence ID" value="CE38053"/>
    <property type="gene ID" value="WBGene00008126"/>
    <property type="gene designation" value="sre-21"/>
</dbReference>
<dbReference type="eggNOG" id="ENOG502TFMC">
    <property type="taxonomic scope" value="Eukaryota"/>
</dbReference>
<dbReference type="GeneTree" id="ENSGT01130000280471"/>
<dbReference type="HOGENOM" id="CLU_073419_0_0_1"/>
<dbReference type="InParanoid" id="O45306"/>
<dbReference type="OMA" id="QSCKLIR"/>
<dbReference type="OrthoDB" id="5877270at2759"/>
<dbReference type="PhylomeDB" id="O45306"/>
<dbReference type="PRO" id="PR:O45306"/>
<dbReference type="Proteomes" id="UP000001940">
    <property type="component" value="Chromosome V"/>
</dbReference>
<dbReference type="GO" id="GO:0016020">
    <property type="term" value="C:membrane"/>
    <property type="evidence" value="ECO:0007669"/>
    <property type="project" value="UniProtKB-SubCell"/>
</dbReference>
<dbReference type="GO" id="GO:0007606">
    <property type="term" value="P:sensory perception of chemical stimulus"/>
    <property type="evidence" value="ECO:0007669"/>
    <property type="project" value="InterPro"/>
</dbReference>
<dbReference type="InterPro" id="IPR004151">
    <property type="entry name" value="7TM_GPCR_serpentine_rcpt_Sre"/>
</dbReference>
<dbReference type="PANTHER" id="PTHR23128:SF136">
    <property type="entry name" value="SERPENTINE RECEPTOR CLASS EPSILON-21"/>
    <property type="match status" value="1"/>
</dbReference>
<dbReference type="PANTHER" id="PTHR23128">
    <property type="entry name" value="SERPENTINE RECEPTOR, CLASS E (EPSILON)-RELATED"/>
    <property type="match status" value="1"/>
</dbReference>
<dbReference type="Pfam" id="PF03125">
    <property type="entry name" value="Sre"/>
    <property type="match status" value="1"/>
</dbReference>
<gene>
    <name type="primary">sre-21</name>
    <name type="ORF">C47A10.4</name>
</gene>
<accession>O45306</accession>
<name>SRE21_CAEEL</name>
<feature type="chain" id="PRO_0000104540" description="Serpentine receptor class epsilon-21">
    <location>
        <begin position="1"/>
        <end position="365"/>
    </location>
</feature>
<feature type="transmembrane region" description="Helical" evidence="1">
    <location>
        <begin position="49"/>
        <end position="69"/>
    </location>
</feature>
<feature type="transmembrane region" description="Helical" evidence="1">
    <location>
        <begin position="82"/>
        <end position="102"/>
    </location>
</feature>
<feature type="transmembrane region" description="Helical" evidence="1">
    <location>
        <begin position="116"/>
        <end position="136"/>
    </location>
</feature>
<feature type="transmembrane region" description="Helical" evidence="1">
    <location>
        <begin position="158"/>
        <end position="178"/>
    </location>
</feature>
<feature type="transmembrane region" description="Helical" evidence="1">
    <location>
        <begin position="189"/>
        <end position="209"/>
    </location>
</feature>
<feature type="transmembrane region" description="Helical" evidence="1">
    <location>
        <begin position="250"/>
        <end position="270"/>
    </location>
</feature>
<feature type="transmembrane region" description="Helical" evidence="1">
    <location>
        <begin position="292"/>
        <end position="314"/>
    </location>
</feature>
<evidence type="ECO:0000255" key="1"/>
<evidence type="ECO:0000305" key="2"/>
<protein>
    <recommendedName>
        <fullName>Serpentine receptor class epsilon-21</fullName>
        <shortName>Protein sre-21</shortName>
    </recommendedName>
</protein>
<reference key="1">
    <citation type="journal article" date="1998" name="Science">
        <title>Genome sequence of the nematode C. elegans: a platform for investigating biology.</title>
        <authorList>
            <consortium name="The C. elegans sequencing consortium"/>
        </authorList>
    </citation>
    <scope>NUCLEOTIDE SEQUENCE [LARGE SCALE GENOMIC DNA]</scope>
    <source>
        <strain>Bristol N2</strain>
    </source>
</reference>